<reference key="1">
    <citation type="submission" date="1994-06" db="EMBL/GenBank/DDBJ databases">
        <title>Cloning and characterization of RubisCO large subunit and small subunit from Synechococcus sp. PCC7002.</title>
        <authorList>
            <person name="Akiyama H."/>
            <person name="Kanai S."/>
            <person name="Hirano M."/>
            <person name="Sugimoto M."/>
            <person name="Kiyohara M."/>
        </authorList>
    </citation>
    <scope>NUCLEOTIDE SEQUENCE [GENOMIC DNA]</scope>
</reference>
<reference key="2">
    <citation type="submission" date="2008-02" db="EMBL/GenBank/DDBJ databases">
        <title>Complete sequence of Synechococcus sp. PCC 7002.</title>
        <authorList>
            <person name="Li T."/>
            <person name="Zhao J."/>
            <person name="Zhao C."/>
            <person name="Liu Z."/>
            <person name="Zhao F."/>
            <person name="Marquardt J."/>
            <person name="Nomura C.T."/>
            <person name="Persson S."/>
            <person name="Detter J.C."/>
            <person name="Richardson P.M."/>
            <person name="Lanz C."/>
            <person name="Schuster S.C."/>
            <person name="Wang J."/>
            <person name="Li S."/>
            <person name="Huang X."/>
            <person name="Cai T."/>
            <person name="Yu Z."/>
            <person name="Luo J."/>
            <person name="Zhao J."/>
            <person name="Bryant D.A."/>
        </authorList>
    </citation>
    <scope>NUCLEOTIDE SEQUENCE [LARGE SCALE GENOMIC DNA]</scope>
    <source>
        <strain>ATCC 27264 / PCC 7002 / PR-6</strain>
    </source>
</reference>
<reference key="3">
    <citation type="journal article" date="2010" name="Nature">
        <title>Coupled chaperone action in folding and assembly of hexadecameric Rubisco.</title>
        <authorList>
            <person name="Liu C."/>
            <person name="Young A.L."/>
            <person name="Starling-Windhof A."/>
            <person name="Bracher A."/>
            <person name="Saschenbrecker S."/>
            <person name="Rao B.V."/>
            <person name="Rao K.V."/>
            <person name="Berninghausen O."/>
            <person name="Mielke T."/>
            <person name="Hartl F.U."/>
            <person name="Beckmann R."/>
            <person name="Hayer-Hartl M."/>
        </authorList>
    </citation>
    <scope>SUBUNIT</scope>
    <source>
        <strain>ATCC 27264 / PCC 7002 / PR-6</strain>
    </source>
</reference>
<reference key="4">
    <citation type="journal article" date="2015" name="Nat. Struct. Mol. Biol.">
        <title>Structure and mechanism of the Rubisco-assembly chaperone Raf1.</title>
        <authorList>
            <person name="Hauser T."/>
            <person name="Bhat J.Y."/>
            <person name="Milicic G."/>
            <person name="Wendler P."/>
            <person name="Hartl F.U."/>
            <person name="Bracher A."/>
            <person name="Hayer-Hartl M."/>
        </authorList>
    </citation>
    <scope>RUBISCO FOLDING AND ASSEMBLY</scope>
    <scope>INTERACTION WITH RAF1</scope>
    <scope>SUBUNIT</scope>
    <source>
        <strain>ATCC 27264 / PCC 7002 / PR-6</strain>
    </source>
</reference>
<reference evidence="9" key="5">
    <citation type="journal article" date="2007" name="Cell">
        <title>Structure and function of RbcX, an assembly chaperone for hexadecameric Rubisco.</title>
        <authorList>
            <person name="Saschenbrecker S."/>
            <person name="Bracher A."/>
            <person name="Rao K.V."/>
            <person name="Rao B.V."/>
            <person name="Hartl F.U."/>
            <person name="Hayer-Hartl M."/>
        </authorList>
    </citation>
    <scope>X-RAY CRYSTALLOGRAPHY (2.95 ANGSTROMS) OF 459-465 IN COMPLEX WITH RBCX2</scope>
    <scope>RUBISCO FOLDING AND ASSEMBLY</scope>
    <scope>SUBUNIT</scope>
    <scope>MUTAGENESIS OF 460-ILE--LEU-470; PHE-462 AND PHE-464</scope>
    <source>
        <strain>ATCC 27264 / PCC 7002 / PR-6</strain>
    </source>
</reference>
<gene>
    <name evidence="3" type="primary">cbbL</name>
    <name evidence="3" type="synonym">rbcL</name>
    <name type="ordered locus">SYNPCC7002_A1798</name>
</gene>
<accession>Q44176</accession>
<accession>B1XPS2</accession>
<feature type="chain" id="PRO_0000062650" description="Ribulose bisphosphate carboxylase large chain">
    <location>
        <begin position="1"/>
        <end position="470"/>
    </location>
</feature>
<feature type="short sequence motif" description="Interacts with RbcX2" evidence="4">
    <location>
        <begin position="459"/>
        <end position="465"/>
    </location>
</feature>
<feature type="active site" description="Proton acceptor" evidence="3">
    <location>
        <position position="170"/>
    </location>
</feature>
<feature type="active site" description="Proton acceptor" evidence="3">
    <location>
        <position position="289"/>
    </location>
</feature>
<feature type="binding site" description="in homodimeric partner" evidence="3">
    <location>
        <position position="118"/>
    </location>
    <ligand>
        <name>substrate</name>
    </ligand>
</feature>
<feature type="binding site" evidence="3">
    <location>
        <position position="168"/>
    </location>
    <ligand>
        <name>substrate</name>
    </ligand>
</feature>
<feature type="binding site" evidence="3">
    <location>
        <position position="172"/>
    </location>
    <ligand>
        <name>substrate</name>
    </ligand>
</feature>
<feature type="binding site" description="via carbamate group" evidence="3">
    <location>
        <position position="196"/>
    </location>
    <ligand>
        <name>Mg(2+)</name>
        <dbReference type="ChEBI" id="CHEBI:18420"/>
    </ligand>
</feature>
<feature type="binding site" evidence="3">
    <location>
        <position position="198"/>
    </location>
    <ligand>
        <name>Mg(2+)</name>
        <dbReference type="ChEBI" id="CHEBI:18420"/>
    </ligand>
</feature>
<feature type="binding site" evidence="3">
    <location>
        <position position="199"/>
    </location>
    <ligand>
        <name>Mg(2+)</name>
        <dbReference type="ChEBI" id="CHEBI:18420"/>
    </ligand>
</feature>
<feature type="binding site" evidence="3">
    <location>
        <position position="290"/>
    </location>
    <ligand>
        <name>substrate</name>
    </ligand>
</feature>
<feature type="binding site" evidence="3">
    <location>
        <position position="322"/>
    </location>
    <ligand>
        <name>substrate</name>
    </ligand>
</feature>
<feature type="binding site" evidence="3">
    <location>
        <position position="374"/>
    </location>
    <ligand>
        <name>substrate</name>
    </ligand>
</feature>
<feature type="site" description="Transition state stabilizer" evidence="3">
    <location>
        <position position="329"/>
    </location>
</feature>
<feature type="modified residue" description="N6-carboxylysine" evidence="3">
    <location>
        <position position="196"/>
    </location>
</feature>
<feature type="disulfide bond" description="Interchain; in linked form" evidence="3">
    <location>
        <position position="242"/>
    </location>
</feature>
<feature type="mutagenesis site" description="Does not assemble into RbcL8, does not interact with RbcX2." evidence="4">
    <location>
        <begin position="460"/>
        <end position="470"/>
    </location>
</feature>
<feature type="mutagenesis site" description="Does not assemble into RbcL8, does not interact with RbcX2." evidence="4">
    <original>F</original>
    <variation>A</variation>
    <location>
        <position position="462"/>
    </location>
</feature>
<feature type="mutagenesis site" description="Decreased assembly of RbcL8, decreased interaction with RbcX2." evidence="4">
    <original>F</original>
    <variation>A</variation>
    <location>
        <position position="464"/>
    </location>
</feature>
<comment type="function">
    <text evidence="3">RuBisCO catalyzes two reactions: the carboxylation of D-ribulose 1,5-bisphosphate, the primary event in carbon dioxide fixation, as well as the oxidative fragmentation of the pentose substrate in the photorespiration process. Both reactions occur simultaneously and in competition at the same active site.</text>
</comment>
<comment type="catalytic activity">
    <reaction evidence="3">
        <text>2 (2R)-3-phosphoglycerate + 2 H(+) = D-ribulose 1,5-bisphosphate + CO2 + H2O</text>
        <dbReference type="Rhea" id="RHEA:23124"/>
        <dbReference type="ChEBI" id="CHEBI:15377"/>
        <dbReference type="ChEBI" id="CHEBI:15378"/>
        <dbReference type="ChEBI" id="CHEBI:16526"/>
        <dbReference type="ChEBI" id="CHEBI:57870"/>
        <dbReference type="ChEBI" id="CHEBI:58272"/>
        <dbReference type="EC" id="4.1.1.39"/>
    </reaction>
</comment>
<comment type="catalytic activity">
    <reaction evidence="3">
        <text>D-ribulose 1,5-bisphosphate + O2 = 2-phosphoglycolate + (2R)-3-phosphoglycerate + 2 H(+)</text>
        <dbReference type="Rhea" id="RHEA:36631"/>
        <dbReference type="ChEBI" id="CHEBI:15378"/>
        <dbReference type="ChEBI" id="CHEBI:15379"/>
        <dbReference type="ChEBI" id="CHEBI:57870"/>
        <dbReference type="ChEBI" id="CHEBI:58033"/>
        <dbReference type="ChEBI" id="CHEBI:58272"/>
    </reaction>
</comment>
<comment type="cofactor">
    <cofactor evidence="3">
        <name>Mg(2+)</name>
        <dbReference type="ChEBI" id="CHEBI:18420"/>
    </cofactor>
    <text evidence="3">Binds 1 Mg(2+) ion per subunit.</text>
</comment>
<comment type="subunit">
    <text evidence="8">Heterohexadecamer of 8 large chains and 8 small chains; disulfide-linked. The disulfide link is formed within the large subunit homodimers (Probable).</text>
</comment>
<comment type="subcellular location">
    <subcellularLocation>
        <location evidence="3">Carboxysome</location>
    </subcellularLocation>
    <text evidence="2 7">In the carboxysome RuBisCO is organized into a paracrystalline array (By similarity). This cyanobacterium makes beta-type carboxysomes (Probable).</text>
</comment>
<comment type="PTM">
    <text evidence="3">The disulfide bond which can form in the large chain dimeric partners within the hexadecamer appears to be associated with oxidative stress and protein turnover.</text>
</comment>
<comment type="miscellaneous">
    <text evidence="1 4 5 6">RuBisCO folding and assembly commences when the nascent large subunit folds with the help of the chaperonin GroEL-GroES. Requires homodimeric RuBisCO chaperone RbcX2 to assemble into RbcL8 octamers, making RbcL8-(RbcX2)8. The exposed C-terminus of RbcL binds in a cleft in RbcX2 (PubMed:17574029, PubMed:20075914). RbcX2 is displaced by RbcS; as RbcX2 is removed RbcS mediates the ordering of an internal RbcL loop (Thr-63-Leu-69) in a catalytically active conformation (By similarity). Interacts with accumulation factor Raf1; dimeric Raf1 acts after chaperonin GroEL-GroES, binding to RbcL(2) leading to an RbcL8-Raf1(8) complex. RbcS displaces Raf1, resulting in holoenzyme formation (PubMed:26237510).</text>
</comment>
<comment type="miscellaneous">
    <text evidence="3">The basic functional RuBisCO is composed of a large chain homodimer in a 'head-to-tail' conformation. In form I RuBisCO this homodimer is arranged in a barrel-like tetramer with the small subunits forming a tetrameric 'cap' on each end of the 'barrel'.</text>
</comment>
<comment type="similarity">
    <text evidence="3">Belongs to the RuBisCO large chain family. Type I subfamily.</text>
</comment>
<comment type="sequence caution" evidence="7">
    <conflict type="erroneous initiation">
        <sequence resource="EMBL-CDS" id="ACA99786"/>
    </conflict>
    <text>Extended N-terminus.</text>
</comment>
<sequence length="470" mass="52159">MQTKSAGFNAGVQDYRLTYYTPDYTPKDTDLLACFRMTPQPGVPPEECAAAVAAESSTGTWTTVWTDGLTDLDRYKGRCYNVEPVPGEDNQYFCFVAYPLDLFEEGSVTNVLTSLVGNVFGFKALRALRLEDIRFPVALIKTYQGPPHGITVERDLLNKYGRPLLGCTIKPKLGLSAKNYGRAVYECLRGGLDFTKDDENINSQPFMRWRDRFLFVQEAIEKSQAETNEVKGHYLNVTAGTCEEMLKRAEFAKEIGTPIIMHDFLTGGFTANTTLAKWCRDNGVLLHIHRAMHAVIDRQKNHGIHFRVLAKCLRLSGGDHLHSGTVVGKLEGDRAATLGFVDLMREDYVEEDRSRGVFFTQDYASLPGTMPVASGGIHVWHMPALVEIFGDDSCLQFGGGTLGHPWGNAPGATANRVALEACVQARNEGRSLAREGNDVLREAGKWSPELAAALDLWKEIKFEFDTVDTL</sequence>
<name>RBL_PICP2</name>
<proteinExistence type="evidence at protein level"/>
<protein>
    <recommendedName>
        <fullName evidence="3">Ribulose bisphosphate carboxylase large chain</fullName>
        <shortName evidence="3">RuBisCO large subunit</shortName>
        <ecNumber evidence="3">4.1.1.39</ecNumber>
    </recommendedName>
</protein>
<evidence type="ECO:0000250" key="1">
    <source>
        <dbReference type="UniProtKB" id="P00880"/>
    </source>
</evidence>
<evidence type="ECO:0000250" key="2">
    <source>
        <dbReference type="UniProtKB" id="Q31NB3"/>
    </source>
</evidence>
<evidence type="ECO:0000255" key="3">
    <source>
        <dbReference type="HAMAP-Rule" id="MF_01338"/>
    </source>
</evidence>
<evidence type="ECO:0000269" key="4">
    <source>
    </source>
</evidence>
<evidence type="ECO:0000269" key="5">
    <source>
    </source>
</evidence>
<evidence type="ECO:0000269" key="6">
    <source>
    </source>
</evidence>
<evidence type="ECO:0000305" key="7"/>
<evidence type="ECO:0000305" key="8">
    <source>
    </source>
</evidence>
<evidence type="ECO:0007744" key="9">
    <source>
        <dbReference type="PDB" id="2PEM"/>
    </source>
</evidence>
<organism>
    <name type="scientific">Picosynechococcus sp. (strain ATCC 27264 / PCC 7002 / PR-6)</name>
    <name type="common">Agmenellum quadruplicatum</name>
    <dbReference type="NCBI Taxonomy" id="32049"/>
    <lineage>
        <taxon>Bacteria</taxon>
        <taxon>Bacillati</taxon>
        <taxon>Cyanobacteriota</taxon>
        <taxon>Cyanophyceae</taxon>
        <taxon>Oscillatoriophycideae</taxon>
        <taxon>Chroococcales</taxon>
        <taxon>Geminocystaceae</taxon>
        <taxon>Picosynechococcus</taxon>
    </lineage>
</organism>
<keyword id="KW-0002">3D-structure</keyword>
<keyword id="KW-1283">Bacterial microcompartment</keyword>
<keyword id="KW-0113">Calvin cycle</keyword>
<keyword id="KW-0120">Carbon dioxide fixation</keyword>
<keyword id="KW-1282">Carboxysome</keyword>
<keyword id="KW-1015">Disulfide bond</keyword>
<keyword id="KW-0456">Lyase</keyword>
<keyword id="KW-0460">Magnesium</keyword>
<keyword id="KW-0479">Metal-binding</keyword>
<keyword id="KW-0503">Monooxygenase</keyword>
<keyword id="KW-0560">Oxidoreductase</keyword>
<keyword id="KW-0601">Photorespiration</keyword>
<keyword id="KW-0602">Photosynthesis</keyword>
<keyword id="KW-1185">Reference proteome</keyword>
<dbReference type="EC" id="4.1.1.39" evidence="3"/>
<dbReference type="EMBL" id="D13971">
    <property type="protein sequence ID" value="BAA03076.1"/>
    <property type="molecule type" value="Genomic_DNA"/>
</dbReference>
<dbReference type="EMBL" id="CP000951">
    <property type="protein sequence ID" value="ACA99786.1"/>
    <property type="status" value="ALT_INIT"/>
    <property type="molecule type" value="Genomic_DNA"/>
</dbReference>
<dbReference type="PDB" id="2PEM">
    <property type="method" value="X-ray"/>
    <property type="resolution" value="2.95 A"/>
    <property type="chains" value="R=459-465"/>
</dbReference>
<dbReference type="PDBsum" id="2PEM"/>
<dbReference type="SMR" id="Q44176"/>
<dbReference type="STRING" id="32049.SYNPCC7002_A1798"/>
<dbReference type="KEGG" id="syp:SYNPCC7002_A1798"/>
<dbReference type="eggNOG" id="COG1850">
    <property type="taxonomic scope" value="Bacteria"/>
</dbReference>
<dbReference type="HOGENOM" id="CLU_031450_2_0_3"/>
<dbReference type="Proteomes" id="UP000001688">
    <property type="component" value="Chromosome"/>
</dbReference>
<dbReference type="GO" id="GO:0031470">
    <property type="term" value="C:carboxysome"/>
    <property type="evidence" value="ECO:0007669"/>
    <property type="project" value="UniProtKB-SubCell"/>
</dbReference>
<dbReference type="GO" id="GO:0000287">
    <property type="term" value="F:magnesium ion binding"/>
    <property type="evidence" value="ECO:0007669"/>
    <property type="project" value="UniProtKB-UniRule"/>
</dbReference>
<dbReference type="GO" id="GO:0004497">
    <property type="term" value="F:monooxygenase activity"/>
    <property type="evidence" value="ECO:0007669"/>
    <property type="project" value="UniProtKB-KW"/>
</dbReference>
<dbReference type="GO" id="GO:0016984">
    <property type="term" value="F:ribulose-bisphosphate carboxylase activity"/>
    <property type="evidence" value="ECO:0007669"/>
    <property type="project" value="UniProtKB-UniRule"/>
</dbReference>
<dbReference type="GO" id="GO:0009853">
    <property type="term" value="P:photorespiration"/>
    <property type="evidence" value="ECO:0007669"/>
    <property type="project" value="UniProtKB-KW"/>
</dbReference>
<dbReference type="GO" id="GO:0019253">
    <property type="term" value="P:reductive pentose-phosphate cycle"/>
    <property type="evidence" value="ECO:0007669"/>
    <property type="project" value="UniProtKB-UniRule"/>
</dbReference>
<dbReference type="CDD" id="cd08212">
    <property type="entry name" value="RuBisCO_large_I"/>
    <property type="match status" value="1"/>
</dbReference>
<dbReference type="Gene3D" id="3.20.20.110">
    <property type="entry name" value="Ribulose bisphosphate carboxylase, large subunit, C-terminal domain"/>
    <property type="match status" value="1"/>
</dbReference>
<dbReference type="Gene3D" id="3.30.70.150">
    <property type="entry name" value="RuBisCO large subunit, N-terminal domain"/>
    <property type="match status" value="1"/>
</dbReference>
<dbReference type="HAMAP" id="MF_01338">
    <property type="entry name" value="RuBisCO_L_type1"/>
    <property type="match status" value="1"/>
</dbReference>
<dbReference type="InterPro" id="IPR033966">
    <property type="entry name" value="RuBisCO"/>
</dbReference>
<dbReference type="InterPro" id="IPR020878">
    <property type="entry name" value="RuBisCo_large_chain_AS"/>
</dbReference>
<dbReference type="InterPro" id="IPR000685">
    <property type="entry name" value="RuBisCO_lsu_C"/>
</dbReference>
<dbReference type="InterPro" id="IPR036376">
    <property type="entry name" value="RuBisCO_lsu_C_sf"/>
</dbReference>
<dbReference type="InterPro" id="IPR017443">
    <property type="entry name" value="RuBisCO_lsu_fd_N"/>
</dbReference>
<dbReference type="InterPro" id="IPR036422">
    <property type="entry name" value="RuBisCO_lsu_N_sf"/>
</dbReference>
<dbReference type="InterPro" id="IPR020888">
    <property type="entry name" value="RuBisCO_lsuI"/>
</dbReference>
<dbReference type="NCBIfam" id="NF003252">
    <property type="entry name" value="PRK04208.1"/>
    <property type="match status" value="1"/>
</dbReference>
<dbReference type="PANTHER" id="PTHR42704">
    <property type="entry name" value="RIBULOSE BISPHOSPHATE CARBOXYLASE"/>
    <property type="match status" value="1"/>
</dbReference>
<dbReference type="PANTHER" id="PTHR42704:SF17">
    <property type="entry name" value="RIBULOSE BISPHOSPHATE CARBOXYLASE LARGE CHAIN"/>
    <property type="match status" value="1"/>
</dbReference>
<dbReference type="Pfam" id="PF00016">
    <property type="entry name" value="RuBisCO_large"/>
    <property type="match status" value="1"/>
</dbReference>
<dbReference type="Pfam" id="PF02788">
    <property type="entry name" value="RuBisCO_large_N"/>
    <property type="match status" value="1"/>
</dbReference>
<dbReference type="SFLD" id="SFLDG01052">
    <property type="entry name" value="RuBisCO"/>
    <property type="match status" value="1"/>
</dbReference>
<dbReference type="SFLD" id="SFLDS00014">
    <property type="entry name" value="RuBisCO"/>
    <property type="match status" value="1"/>
</dbReference>
<dbReference type="SFLD" id="SFLDG00301">
    <property type="entry name" value="RuBisCO-like_proteins"/>
    <property type="match status" value="1"/>
</dbReference>
<dbReference type="SUPFAM" id="SSF51649">
    <property type="entry name" value="RuBisCo, C-terminal domain"/>
    <property type="match status" value="1"/>
</dbReference>
<dbReference type="SUPFAM" id="SSF54966">
    <property type="entry name" value="RuBisCO, large subunit, small (N-terminal) domain"/>
    <property type="match status" value="1"/>
</dbReference>
<dbReference type="PROSITE" id="PS00157">
    <property type="entry name" value="RUBISCO_LARGE"/>
    <property type="match status" value="1"/>
</dbReference>